<sequence length="137" mass="15471">MANQPSAEELKKKLSEMQFYVTQDRGTEPPFTGRLLHNKRDGVYHCLVCDTPLFHSHTKYDSGCGWPSFYQPVSEEAIRYIDDFSHGMQRVEIRCGNCDAHLGHVFPDGPQPTGERYCVNSASLAFSDEKNGDQLKG</sequence>
<feature type="chain" id="PRO_1000145383" description="Peptide methionine sulfoxide reductase MsrB">
    <location>
        <begin position="1"/>
        <end position="137"/>
    </location>
</feature>
<feature type="domain" description="MsrB" evidence="2">
    <location>
        <begin position="7"/>
        <end position="129"/>
    </location>
</feature>
<feature type="active site" description="Nucleophile" evidence="2">
    <location>
        <position position="118"/>
    </location>
</feature>
<feature type="binding site" evidence="2">
    <location>
        <position position="46"/>
    </location>
    <ligand>
        <name>Zn(2+)</name>
        <dbReference type="ChEBI" id="CHEBI:29105"/>
    </ligand>
</feature>
<feature type="binding site" evidence="2">
    <location>
        <position position="49"/>
    </location>
    <ligand>
        <name>Zn(2+)</name>
        <dbReference type="ChEBI" id="CHEBI:29105"/>
    </ligand>
</feature>
<feature type="binding site" evidence="2">
    <location>
        <position position="95"/>
    </location>
    <ligand>
        <name>Zn(2+)</name>
        <dbReference type="ChEBI" id="CHEBI:29105"/>
    </ligand>
</feature>
<feature type="binding site" evidence="2">
    <location>
        <position position="98"/>
    </location>
    <ligand>
        <name>Zn(2+)</name>
        <dbReference type="ChEBI" id="CHEBI:29105"/>
    </ligand>
</feature>
<dbReference type="EC" id="1.8.4.12" evidence="1"/>
<dbReference type="EMBL" id="CP001127">
    <property type="protein sequence ID" value="ACF88643.1"/>
    <property type="molecule type" value="Genomic_DNA"/>
</dbReference>
<dbReference type="RefSeq" id="WP_001519539.1">
    <property type="nucleotide sequence ID" value="NC_011094.1"/>
</dbReference>
<dbReference type="SMR" id="B4TUA8"/>
<dbReference type="KEGG" id="sew:SeSA_A1385"/>
<dbReference type="HOGENOM" id="CLU_031040_8_5_6"/>
<dbReference type="Proteomes" id="UP000001865">
    <property type="component" value="Chromosome"/>
</dbReference>
<dbReference type="GO" id="GO:0005737">
    <property type="term" value="C:cytoplasm"/>
    <property type="evidence" value="ECO:0007669"/>
    <property type="project" value="TreeGrafter"/>
</dbReference>
<dbReference type="GO" id="GO:0033743">
    <property type="term" value="F:peptide-methionine (R)-S-oxide reductase activity"/>
    <property type="evidence" value="ECO:0007669"/>
    <property type="project" value="UniProtKB-UniRule"/>
</dbReference>
<dbReference type="GO" id="GO:0008270">
    <property type="term" value="F:zinc ion binding"/>
    <property type="evidence" value="ECO:0007669"/>
    <property type="project" value="UniProtKB-UniRule"/>
</dbReference>
<dbReference type="GO" id="GO:0030091">
    <property type="term" value="P:protein repair"/>
    <property type="evidence" value="ECO:0007669"/>
    <property type="project" value="InterPro"/>
</dbReference>
<dbReference type="GO" id="GO:0006979">
    <property type="term" value="P:response to oxidative stress"/>
    <property type="evidence" value="ECO:0007669"/>
    <property type="project" value="InterPro"/>
</dbReference>
<dbReference type="FunFam" id="2.170.150.20:FF:000001">
    <property type="entry name" value="Peptide methionine sulfoxide reductase MsrB"/>
    <property type="match status" value="1"/>
</dbReference>
<dbReference type="Gene3D" id="2.170.150.20">
    <property type="entry name" value="Peptide methionine sulfoxide reductase"/>
    <property type="match status" value="1"/>
</dbReference>
<dbReference type="HAMAP" id="MF_01400">
    <property type="entry name" value="MsrB"/>
    <property type="match status" value="1"/>
</dbReference>
<dbReference type="InterPro" id="IPR028427">
    <property type="entry name" value="Met_Sox_Rdtase_MsrB"/>
</dbReference>
<dbReference type="InterPro" id="IPR002579">
    <property type="entry name" value="Met_Sox_Rdtase_MsrB_dom"/>
</dbReference>
<dbReference type="InterPro" id="IPR011057">
    <property type="entry name" value="Mss4-like_sf"/>
</dbReference>
<dbReference type="NCBIfam" id="TIGR00357">
    <property type="entry name" value="peptide-methionine (R)-S-oxide reductase MsrB"/>
    <property type="match status" value="1"/>
</dbReference>
<dbReference type="PANTHER" id="PTHR10173">
    <property type="entry name" value="METHIONINE SULFOXIDE REDUCTASE"/>
    <property type="match status" value="1"/>
</dbReference>
<dbReference type="PANTHER" id="PTHR10173:SF52">
    <property type="entry name" value="METHIONINE-R-SULFOXIDE REDUCTASE B1"/>
    <property type="match status" value="1"/>
</dbReference>
<dbReference type="Pfam" id="PF01641">
    <property type="entry name" value="SelR"/>
    <property type="match status" value="1"/>
</dbReference>
<dbReference type="SUPFAM" id="SSF51316">
    <property type="entry name" value="Mss4-like"/>
    <property type="match status" value="1"/>
</dbReference>
<dbReference type="PROSITE" id="PS51790">
    <property type="entry name" value="MSRB"/>
    <property type="match status" value="1"/>
</dbReference>
<name>MSRB_SALSV</name>
<gene>
    <name evidence="1" type="primary">msrB</name>
    <name type="ordered locus">SeSA_A1385</name>
</gene>
<evidence type="ECO:0000255" key="1">
    <source>
        <dbReference type="HAMAP-Rule" id="MF_01400"/>
    </source>
</evidence>
<evidence type="ECO:0000255" key="2">
    <source>
        <dbReference type="PROSITE-ProRule" id="PRU01126"/>
    </source>
</evidence>
<reference key="1">
    <citation type="journal article" date="2011" name="J. Bacteriol.">
        <title>Comparative genomics of 28 Salmonella enterica isolates: evidence for CRISPR-mediated adaptive sublineage evolution.</title>
        <authorList>
            <person name="Fricke W.F."/>
            <person name="Mammel M.K."/>
            <person name="McDermott P.F."/>
            <person name="Tartera C."/>
            <person name="White D.G."/>
            <person name="Leclerc J.E."/>
            <person name="Ravel J."/>
            <person name="Cebula T.A."/>
        </authorList>
    </citation>
    <scope>NUCLEOTIDE SEQUENCE [LARGE SCALE GENOMIC DNA]</scope>
    <source>
        <strain>CVM19633</strain>
    </source>
</reference>
<comment type="catalytic activity">
    <reaction evidence="1">
        <text>L-methionyl-[protein] + [thioredoxin]-disulfide + H2O = L-methionyl-(R)-S-oxide-[protein] + [thioredoxin]-dithiol</text>
        <dbReference type="Rhea" id="RHEA:24164"/>
        <dbReference type="Rhea" id="RHEA-COMP:10698"/>
        <dbReference type="Rhea" id="RHEA-COMP:10700"/>
        <dbReference type="Rhea" id="RHEA-COMP:12313"/>
        <dbReference type="Rhea" id="RHEA-COMP:12314"/>
        <dbReference type="ChEBI" id="CHEBI:15377"/>
        <dbReference type="ChEBI" id="CHEBI:16044"/>
        <dbReference type="ChEBI" id="CHEBI:29950"/>
        <dbReference type="ChEBI" id="CHEBI:45764"/>
        <dbReference type="ChEBI" id="CHEBI:50058"/>
        <dbReference type="EC" id="1.8.4.12"/>
    </reaction>
</comment>
<comment type="cofactor">
    <cofactor evidence="1">
        <name>Zn(2+)</name>
        <dbReference type="ChEBI" id="CHEBI:29105"/>
    </cofactor>
    <text evidence="1">Binds 1 zinc ion per subunit. The zinc ion is important for the structural integrity of the protein.</text>
</comment>
<comment type="similarity">
    <text evidence="1">Belongs to the MsrB Met sulfoxide reductase family.</text>
</comment>
<protein>
    <recommendedName>
        <fullName evidence="1">Peptide methionine sulfoxide reductase MsrB</fullName>
        <ecNumber evidence="1">1.8.4.12</ecNumber>
    </recommendedName>
    <alternativeName>
        <fullName evidence="1">Peptide-methionine (R)-S-oxide reductase</fullName>
    </alternativeName>
</protein>
<accession>B4TUA8</accession>
<organism>
    <name type="scientific">Salmonella schwarzengrund (strain CVM19633)</name>
    <dbReference type="NCBI Taxonomy" id="439843"/>
    <lineage>
        <taxon>Bacteria</taxon>
        <taxon>Pseudomonadati</taxon>
        <taxon>Pseudomonadota</taxon>
        <taxon>Gammaproteobacteria</taxon>
        <taxon>Enterobacterales</taxon>
        <taxon>Enterobacteriaceae</taxon>
        <taxon>Salmonella</taxon>
    </lineage>
</organism>
<keyword id="KW-0479">Metal-binding</keyword>
<keyword id="KW-0560">Oxidoreductase</keyword>
<keyword id="KW-0862">Zinc</keyword>
<proteinExistence type="inferred from homology"/>